<keyword id="KW-0963">Cytoplasm</keyword>
<keyword id="KW-0436">Ligase</keyword>
<keyword id="KW-0596">Phosphopantetheine</keyword>
<keyword id="KW-0597">Phosphoprotein</keyword>
<keyword id="KW-1185">Reference proteome</keyword>
<keyword id="KW-0677">Repeat</keyword>
<feature type="chain" id="PRO_0000339124" description="Hydroxamate-type ferrichrome siderophore peptide synthetase">
    <location>
        <begin position="1"/>
        <end position="4924"/>
    </location>
</feature>
<feature type="domain" description="Carrier 1" evidence="1">
    <location>
        <begin position="715"/>
        <end position="791"/>
    </location>
</feature>
<feature type="domain" description="Carrier 2" evidence="1">
    <location>
        <begin position="2172"/>
        <end position="2246"/>
    </location>
</feature>
<feature type="domain" description="Carrier 3" evidence="1">
    <location>
        <begin position="3254"/>
        <end position="3328"/>
    </location>
</feature>
<feature type="domain" description="Carrier 4" evidence="1">
    <location>
        <begin position="4402"/>
        <end position="4478"/>
    </location>
</feature>
<feature type="modified residue" description="O-(pantetheine 4'-phosphoryl)serine" evidence="1">
    <location>
        <position position="752"/>
    </location>
</feature>
<feature type="modified residue" description="O-(pantetheine 4'-phosphoryl)serine" evidence="1">
    <location>
        <position position="2206"/>
    </location>
</feature>
<feature type="modified residue" description="O-(pantetheine 4'-phosphoryl)serine" evidence="1">
    <location>
        <position position="3288"/>
    </location>
</feature>
<feature type="modified residue" description="O-(pantetheine 4'-phosphoryl)serine" evidence="1">
    <location>
        <position position="4439"/>
    </location>
</feature>
<sequence length="4924" mass="559849">MKNSNEEDAFSTQISQLGPMRPSSDAPYHVLSLPFSHPYSAFLDAWSWLFCGITGGEVSFFFFPVSDDVIPNTNPKNCQCYLYHSTNSQLEPLEVFHLHKLHSAVFTSRRDPSFADDLFESSKPCLNQLLSYFSDITAFRSMDVVADIAFVCSPNFLTLKWNSSLFDDDLARLLFFMINSKITNYDLPFSILNSPCSDLCLNSSSLANYLHGCFYHNTLSHPYQDALKFIYEIGDDLEDTFRSFSFLELHSLAIKLSKLVTCKNEVVPIMVSHSPALFVGILAILYSGNAYCPIDVETRTERVHFISKDVDASFAIVSEEFVNRFPNNTIILKVPEYNESMEIKVDDEIPPFPFPESLDSVAYVLYTSGSTGNPKGVAISHRAATNSIKSHGYLYPMFGLERGDAWLQFANVTFDVSVFEIFGNWNNGLTLVTSKRQNLIGNLEYLIYDYKIAALELTPTVANVISLDENKELFTSVRMLITIGELLTNRIIDFWGERLVNAYGPTEAAIHVTLNPSKALTTVYLVGVPLQSATICVVSLPTEDSQPHVLHEGFLGEVCIAGPQLSSGYINRPEINAKAFVEVQYNEQTLSIYRTGDLGRIINGKLYIFGRIAGDMQIKIRGRRIEIGEIESKLAPSVDSLAIEKIGDNLVAFYVGDEMKLRKHAESHLASWMCPTKYVGLPGFPRLASGKTDRKALKIQFSASDKHSTDFSSFNQSELLVANVLHEICEKRFNSVVSISRFSSIFDLGLDSLDIVYFVRKIRSLGFEANPSIVLTSKVVFKIAESLILLKPNEVQSKNNFLNKCTPLQKGMLYESFSNNGNLYFNHTVFKIAASPEKVKLAWEKLLDTHTILSNGFALDENEGFTRFILEKKPPLYSYSKNCLECIQKHFTTKEFDEQFLNSGPLDAAVIYDSSNCYLSIVWHHALYDGWSIDIIMQQLFMLIHDRRLTIVPQFEDYVQELESLRRLNYKNCISFWKKYLKDFKFKSLSYQREKMGVVELSSNISLLSVENICKQLQTTPLSFFLTAWSTVLSSYLKTNDFLVGTVVSGRVNSLLPNVDYVIGPCMQTLPVRIKLDDELSYKNLCQNLFKELSFVLKHSVMAISDFQEELLVSNLFESILIYQQSGIPSVDESFISLIHSTDHVEQPLLIEIEKNKGYKFKLTGYLSSELLNNLLNDFDKILNFILYNIESKIQTHASFNVTITEHNHVESKARTGFSKREEKLVRSCLSKILGNTVLSADVFENLQNYGFDSLCAMRFFSLLRKSSGIGNLKIPNMKSNPTIASLCELLVLPTETLSADNEITFYEVSDIQHEANLDIESFQYFPCTPMQQALLASSEKNGVEYYYNKYLFETGKSSQEEIYLLFKTLLNNLPILRTCFFVTRSKKYPYCQVVLNEPNFYFQVLPYKGESLSKYNLAEIPLLDSKKVPIQIFFLQGENKNYVLFCIHHVLYDAWAFQLIMDDINHLLRKENPKGSQSMLKFISYLHRYNKNVDLEIWSKIFLGFKPSKFPELCKDINPEQRTYKCNLSISLSQIDDLCNGFSFTTSTFLQCCWAKTLSFLLNSRDICFGNIISGRDVPVDEVVSLVAPTFNSFPLRVLLDSKLSFAEVCGQLQRLKETLQEHQMTSVQSICKSLTVKSLFDTVFIIQPQLLSDRTGPWKLLNESSSMDMRFIIELLLGSDDSPLTLVGTGTGKSGKLVCNLYKTILKHYVHYGLSTSVPLYTSLEKHNLISRSPSSPPPIHTNFDTNADIITLFEKEANEHPSSIALHFVYNVDKENIYSYKFFSEYSIKASYWLHSIGIKKNDVVAVFIDKSLDYYSLMLGVLRIGAFFFPLEHCSSLNFAKENLLRTNVKLLIVDKFLPFEDVNQVEIDKFRQVVDKLPTVEIPNESRSSAFIFPSYELAEGLTMMESSSFMDSIISFIDSTCFPSSSRWFQYAPSSTACQMFDCFMCWFFGCTLISGPQLFLKNNLKPLLLATHASHLITTSSIAASLKGEDIPSIQRLYCYEGPINNYMIKSWGSRLSYIYAFKPLICSCVPATEYLESNIMMVGIPLKGLIFAVVNSDTNTLAPIGSSGELCIASVKKSGNTMMDSQRVFTFENRSYYRTGDIVRILAGGEFEYIKKKSFIFIDSMPLDIEGKINVDKLRDLLNDDNYIFKVDNDEFPKNDNILDGFQEKVILTISDFASIPFEKLSLNTKLSTIGIDSISAIQLSKDLREIFHLRISALDILNSSTINSLIRKLKRRRTESHTRNDKIHESIDQFFKDIRKQILIPQTLCDKIEQILPCLASQCSMLSRFYTNGGKDYLNYSVFHLQKYNDPLLLRSSWENVISNVSILRTKFQTTKHKRSPFCQVTYSKVDIPWSMELHAASVEKVLNEYLELQRRDLLQGKNVLPYSLIFVRTFSQETFLIIIMHHALYDESSLRKILGLVEKSLNSPIGKFNHEPIVRQIELLKANYEEAKAFWIKQLLSFQPTNFPSLTACRIDNEDRMLTKKPCALNYTNLTKWCNAHDVTLQVLGQLVWAKILASYCAENYAVFGTVLSGKSVLTDVDDNIFPTVTTIPCVVKLQGTVEDCLRQLQKFNLDANKFQFTSLLDIKKWLNLGPSEKLFSSLFSIYVDNDIPLKLFNDECKAQGFIEFPVALEMRFSESTSELTLNSAVNYIPQAHASLILDQFNAILTTIFNNPLQQIEILENSLPTQLLSIKPAIVGDYPTEIKYLHQFVEYFAQKSPNSCALEFALDINQDSVQLIRLTYSELNERANKLAHNLKSYGFRVGSIIAVYFDKCIEAFISMLAILKAGCCFLALDVSAPTERIRYIVTDSTAVLVMSTGELYTKLLNASINVTILDASDPGNYSNNIENPYTKDFEDSNLAYVLYTSGSTGKPKGCCLTHHNVVQCMLAFQDQFAGEWDTNSRFLAFASFHFDVSVLEQYFSWSTGITLVAAPQSLILQDLPTAISALKITHVDLTPSLASILTPKTAPLLRVFITGGEQIKQELLNIWGDTRVLYNFWGPTELTIGASAFRKVPKNAKVSNIGPPFPNCSTYILSKETKVPVLLGGLGEICMGGNQVAKGYLNLPEQTDAKFYFDRRFNDRIYHTGDLGRLLKDNNSLEFCGRTDDQIKLRGQRIEIGEINAVIKSSSEKILGVYTLAVVHPVLRKQQLVAFIHVKGISASHLIVHDHKDPSLIGFINSACKASLAKYMVPSFYVFISSVPLTPTNKFDKKKVIEEFSRLSLGQLSSFAPAREENDNEGSNVVEPKLLKIIADFSDVKVTDISPQTSVFELGLDSISAVALSGLLRKSGYDNANPSLILTSSTISNLGFALNTQTNEELEDSIKVNSIIKLPSCSQFPFHQYIELINPCLPLVEGLLFELERSNNENYYNSFFFLFEKREQADQFINNFKLLRKQYEVLRSSFLKSDGEYFQVVWKSDFIAEVDVLNNDSLIKTVRYSLKCEKGFFLVTVTLFHGIYDGWSLDLLLNDLARLCSRKTLAPRPRYSKIVRQLLINTSLKKDTKEYWLNLFRSKNIYVPIFQGKLDMAITLGHKLSISSAKLSTICRSVLKASVNSALLTSWICFLNSIGAINCVGIVVSGRSEISMDCLEVMGPLFNTIPFPLFLEKDESFDCLVRRCQLTLASMIPYHQTSLREIKKWLRRSELFNVLFTYNLHPSVIKQCEFPWSFSSESTDTGYPLALEIEEDVDGTMNLHLSSNFKYIGQTEIIGLLDSYDCYLSSLLETSNAKISSRPNVLMPNQPEVKQYIPNVWNDVLKKLITILSPKVIITKLDFERDTFVHEFGIDSIDLIWLASKVSEAGIGKLDIGLLMEKPTFYRILQLLCETSANHSTSLKHEFGTLNTLLSKYLTDQDAEDCYPATPIQSGLLLETMNQKNLYQNDVLFSLDAEISLEKLQNSWKRLCQKNAILRTHFAISEDSSEPMVIQIVDKFEARSCLNQIKILPSRFTNIEDTLRFLRHDEEAKRFLDPFKNPPYYVQFFEIGAKNYMFVQMHHSLYDGWSLSLMYDELMQLYRDEQGNSRKPFKDYIIQLYSLKYDYDFWFKYFENLSIPKPLPFLSNNGKFMSSMMSTVSLPSVRLACQLYGVSIQSLVFFTWGYYIASVLNCPDIVFHTVLSGRTYIEGAETVMGPCMNTIPVRIKFEGALQTLKKTSRMLINLAKQQHTPLSWIYKTYGNVAAIPMESILVYQHLPDSSQSETFLNVVTDNSAVDYPIAIQFEIQGDTLNWLTSLDLARVDGDVANQLLQTIDKIFSNLTKGSFEKLTFNFSNFVKYRQYQINLKDFRENLLLTEEAISDCDLLIIDERVLVVFILFPEPDAKFPYLVLNEEIIRMLKSYIKKFRLTLSSAMVPDILVPVSYLPRSLDHSENEGKLLNIYNSISADNLKILSAVHEIHLNETEKILLEGFSKIICLPQDSVDISNNFFQLGMDSIRSIHLCSYLRNKGLNVSVSDILQHSSIEKLAHYLQYEKKESSSSFDIASFQLDEYLNTLPSNIPINLVQKILPCSAGQMYALNAWYNTEKKKYFHTFFYTTEEKIELLKLKLAWAKLVKSSDILRTTFIRSSSPCYPLLQIVLKSFECPWEHYITDNLHDTCLKIQKRELVTNTTLQEVPLRIATIETSGKFVFCLTIHHALYDGWSLDIMINYLSKMYYDDSLTIVQQNSQLFLSTVLDPAVGLSRKKFWNNYLTNYKPYTFLEKPSASQEITLFFPKLFSLDTVYSSVRSRGLTVQSVSFAVFARLLANEVKQEDVVFGIYVSGRTLDVDNIDELLFPTFNVVPLRVTDTFRPLGEIALEIQSFLNEISGNLQYISLLDLPVHGMMDIAVNFLSTGDNNEPSKVFSVYPLKLNNAELKINEVETTIDGCEILFGNKPKLDFELAIRDGYLEIGLFCQSSIFSKREASVFINNFVTIIKEIEL</sequence>
<accession>Q9P7T1</accession>
<gene>
    <name type="primary">sib1</name>
    <name type="ORF">SPAC23G3.02c</name>
</gene>
<dbReference type="EC" id="6.-.-.-"/>
<dbReference type="EMBL" id="CU329670">
    <property type="protein sequence ID" value="CAB72227.1"/>
    <property type="molecule type" value="Genomic_DNA"/>
</dbReference>
<dbReference type="PIR" id="T50176">
    <property type="entry name" value="T50176"/>
</dbReference>
<dbReference type="RefSeq" id="NP_593102.1">
    <property type="nucleotide sequence ID" value="NM_001018499.2"/>
</dbReference>
<dbReference type="SMR" id="Q9P7T1"/>
<dbReference type="BioGRID" id="277956">
    <property type="interactions" value="12"/>
</dbReference>
<dbReference type="FunCoup" id="Q9P7T1">
    <property type="interactions" value="420"/>
</dbReference>
<dbReference type="STRING" id="284812.Q9P7T1"/>
<dbReference type="iPTMnet" id="Q9P7T1"/>
<dbReference type="PaxDb" id="4896-SPAC23G3.02c.1"/>
<dbReference type="EnsemblFungi" id="SPAC23G3.02c.1">
    <property type="protein sequence ID" value="SPAC23G3.02c.1:pep"/>
    <property type="gene ID" value="SPAC23G3.02c"/>
</dbReference>
<dbReference type="GeneID" id="2541451"/>
<dbReference type="KEGG" id="spo:2541451"/>
<dbReference type="PomBase" id="SPAC23G3.02c">
    <property type="gene designation" value="sib1"/>
</dbReference>
<dbReference type="VEuPathDB" id="FungiDB:SPAC23G3.02c"/>
<dbReference type="eggNOG" id="KOG1178">
    <property type="taxonomic scope" value="Eukaryota"/>
</dbReference>
<dbReference type="HOGENOM" id="CLU_000092_2_0_1"/>
<dbReference type="InParanoid" id="Q9P7T1"/>
<dbReference type="OMA" id="HHIVTEG"/>
<dbReference type="PhylomeDB" id="Q9P7T1"/>
<dbReference type="PRO" id="PR:Q9P7T1"/>
<dbReference type="Proteomes" id="UP000002485">
    <property type="component" value="Chromosome I"/>
</dbReference>
<dbReference type="GO" id="GO:0005737">
    <property type="term" value="C:cytoplasm"/>
    <property type="evidence" value="ECO:0000318"/>
    <property type="project" value="GO_Central"/>
</dbReference>
<dbReference type="GO" id="GO:0005829">
    <property type="term" value="C:cytosol"/>
    <property type="evidence" value="ECO:0007005"/>
    <property type="project" value="PomBase"/>
</dbReference>
<dbReference type="GO" id="GO:0016879">
    <property type="term" value="F:ligase activity, forming carbon-nitrogen bonds"/>
    <property type="evidence" value="ECO:0000305"/>
    <property type="project" value="PomBase"/>
</dbReference>
<dbReference type="GO" id="GO:1904091">
    <property type="term" value="F:non-ribosomal peptide synthetase activity"/>
    <property type="evidence" value="ECO:0000303"/>
    <property type="project" value="PomBase"/>
</dbReference>
<dbReference type="GO" id="GO:0031177">
    <property type="term" value="F:phosphopantetheine binding"/>
    <property type="evidence" value="ECO:0000318"/>
    <property type="project" value="GO_Central"/>
</dbReference>
<dbReference type="GO" id="GO:0043041">
    <property type="term" value="P:amino acid activation for nonribosomal peptide biosynthetic process"/>
    <property type="evidence" value="ECO:0000318"/>
    <property type="project" value="GO_Central"/>
</dbReference>
<dbReference type="GO" id="GO:0010106">
    <property type="term" value="P:cellular response to iron ion starvation"/>
    <property type="evidence" value="ECO:0000316"/>
    <property type="project" value="PomBase"/>
</dbReference>
<dbReference type="GO" id="GO:0031169">
    <property type="term" value="P:ferrichrome biosynthetic process"/>
    <property type="evidence" value="ECO:0000315"/>
    <property type="project" value="PomBase"/>
</dbReference>
<dbReference type="GO" id="GO:0044550">
    <property type="term" value="P:secondary metabolite biosynthetic process"/>
    <property type="evidence" value="ECO:0000318"/>
    <property type="project" value="GO_Central"/>
</dbReference>
<dbReference type="CDD" id="cd05918">
    <property type="entry name" value="A_NRPS_SidN3_like"/>
    <property type="match status" value="2"/>
</dbReference>
<dbReference type="CDD" id="cd19542">
    <property type="entry name" value="CT_NRPS-like"/>
    <property type="match status" value="4"/>
</dbReference>
<dbReference type="FunFam" id="1.10.1200.10:FF:000118">
    <property type="entry name" value="Hydroxamate-type ferrichrome siderophore peptide synthetase"/>
    <property type="match status" value="1"/>
</dbReference>
<dbReference type="FunFam" id="3.30.559.30:FF:000030">
    <property type="entry name" value="Hydroxamate-type ferrichrome siderophore peptide synthetase"/>
    <property type="match status" value="1"/>
</dbReference>
<dbReference type="FunFam" id="3.30.559.30:FF:000035">
    <property type="entry name" value="Hydroxamate-type ferrichrome siderophore peptide synthetase"/>
    <property type="match status" value="1"/>
</dbReference>
<dbReference type="FunFam" id="3.30.559.30:FF:000100">
    <property type="entry name" value="Hydroxamate-type ferrichrome siderophore peptide synthetase"/>
    <property type="match status" value="1"/>
</dbReference>
<dbReference type="FunFam" id="3.30.559.30:FF:000101">
    <property type="entry name" value="Hydroxamate-type ferrichrome siderophore peptide synthetase"/>
    <property type="match status" value="1"/>
</dbReference>
<dbReference type="FunFam" id="3.40.50.980:FF:000001">
    <property type="entry name" value="Non-ribosomal peptide synthetase"/>
    <property type="match status" value="1"/>
</dbReference>
<dbReference type="FunFam" id="3.30.300.30:FF:000033">
    <property type="entry name" value="Nonribosomal siderophore peptide synthase SidC"/>
    <property type="match status" value="1"/>
</dbReference>
<dbReference type="FunFam" id="3.40.50.12780:FF:000024">
    <property type="entry name" value="Nonribosomal siderophore peptide synthase SidC"/>
    <property type="match status" value="1"/>
</dbReference>
<dbReference type="Gene3D" id="3.30.300.30">
    <property type="match status" value="2"/>
</dbReference>
<dbReference type="Gene3D" id="1.10.1200.10">
    <property type="entry name" value="ACP-like"/>
    <property type="match status" value="2"/>
</dbReference>
<dbReference type="Gene3D" id="3.30.559.10">
    <property type="entry name" value="Chloramphenicol acetyltransferase-like domain"/>
    <property type="match status" value="6"/>
</dbReference>
<dbReference type="Gene3D" id="3.40.50.12780">
    <property type="entry name" value="N-terminal domain of ligase-like"/>
    <property type="match status" value="3"/>
</dbReference>
<dbReference type="Gene3D" id="3.30.559.30">
    <property type="entry name" value="Nonribosomal peptide synthetase, condensation domain"/>
    <property type="match status" value="6"/>
</dbReference>
<dbReference type="InterPro" id="IPR010071">
    <property type="entry name" value="AA_adenyl_dom"/>
</dbReference>
<dbReference type="InterPro" id="IPR036736">
    <property type="entry name" value="ACP-like_sf"/>
</dbReference>
<dbReference type="InterPro" id="IPR045851">
    <property type="entry name" value="AMP-bd_C_sf"/>
</dbReference>
<dbReference type="InterPro" id="IPR020845">
    <property type="entry name" value="AMP-binding_CS"/>
</dbReference>
<dbReference type="InterPro" id="IPR000873">
    <property type="entry name" value="AMP-dep_synth/lig_dom"/>
</dbReference>
<dbReference type="InterPro" id="IPR042099">
    <property type="entry name" value="ANL_N_sf"/>
</dbReference>
<dbReference type="InterPro" id="IPR023213">
    <property type="entry name" value="CAT-like_dom_sf"/>
</dbReference>
<dbReference type="InterPro" id="IPR001242">
    <property type="entry name" value="Condensatn"/>
</dbReference>
<dbReference type="InterPro" id="IPR020806">
    <property type="entry name" value="PKS_PP-bd"/>
</dbReference>
<dbReference type="InterPro" id="IPR009081">
    <property type="entry name" value="PP-bd_ACP"/>
</dbReference>
<dbReference type="InterPro" id="IPR006162">
    <property type="entry name" value="Ppantetheine_attach_site"/>
</dbReference>
<dbReference type="NCBIfam" id="TIGR01733">
    <property type="entry name" value="AA-adenyl-dom"/>
    <property type="match status" value="1"/>
</dbReference>
<dbReference type="PANTHER" id="PTHR45527:SF1">
    <property type="entry name" value="FATTY ACID SYNTHASE"/>
    <property type="match status" value="1"/>
</dbReference>
<dbReference type="PANTHER" id="PTHR45527">
    <property type="entry name" value="NONRIBOSOMAL PEPTIDE SYNTHETASE"/>
    <property type="match status" value="1"/>
</dbReference>
<dbReference type="Pfam" id="PF23297">
    <property type="entry name" value="ACP_SdgA_C"/>
    <property type="match status" value="1"/>
</dbReference>
<dbReference type="Pfam" id="PF00501">
    <property type="entry name" value="AMP-binding"/>
    <property type="match status" value="3"/>
</dbReference>
<dbReference type="Pfam" id="PF00668">
    <property type="entry name" value="Condensation"/>
    <property type="match status" value="6"/>
</dbReference>
<dbReference type="Pfam" id="PF00550">
    <property type="entry name" value="PP-binding"/>
    <property type="match status" value="2"/>
</dbReference>
<dbReference type="SMART" id="SM00823">
    <property type="entry name" value="PKS_PP"/>
    <property type="match status" value="2"/>
</dbReference>
<dbReference type="SMART" id="SM01294">
    <property type="entry name" value="PKS_PP_betabranch"/>
    <property type="match status" value="1"/>
</dbReference>
<dbReference type="SUPFAM" id="SSF56801">
    <property type="entry name" value="Acetyl-CoA synthetase-like"/>
    <property type="match status" value="3"/>
</dbReference>
<dbReference type="SUPFAM" id="SSF47336">
    <property type="entry name" value="ACP-like"/>
    <property type="match status" value="4"/>
</dbReference>
<dbReference type="SUPFAM" id="SSF52777">
    <property type="entry name" value="CoA-dependent acyltransferases"/>
    <property type="match status" value="12"/>
</dbReference>
<dbReference type="PROSITE" id="PS00455">
    <property type="entry name" value="AMP_BINDING"/>
    <property type="match status" value="2"/>
</dbReference>
<dbReference type="PROSITE" id="PS50075">
    <property type="entry name" value="CARRIER"/>
    <property type="match status" value="4"/>
</dbReference>
<dbReference type="PROSITE" id="PS00012">
    <property type="entry name" value="PHOSPHOPANTETHEINE"/>
    <property type="match status" value="2"/>
</dbReference>
<reference key="1">
    <citation type="journal article" date="2002" name="Nature">
        <title>The genome sequence of Schizosaccharomyces pombe.</title>
        <authorList>
            <person name="Wood V."/>
            <person name="Gwilliam R."/>
            <person name="Rajandream M.A."/>
            <person name="Lyne M.H."/>
            <person name="Lyne R."/>
            <person name="Stewart A."/>
            <person name="Sgouros J.G."/>
            <person name="Peat N."/>
            <person name="Hayles J."/>
            <person name="Baker S.G."/>
            <person name="Basham D."/>
            <person name="Bowman S."/>
            <person name="Brooks K."/>
            <person name="Brown D."/>
            <person name="Brown S."/>
            <person name="Chillingworth T."/>
            <person name="Churcher C.M."/>
            <person name="Collins M."/>
            <person name="Connor R."/>
            <person name="Cronin A."/>
            <person name="Davis P."/>
            <person name="Feltwell T."/>
            <person name="Fraser A."/>
            <person name="Gentles S."/>
            <person name="Goble A."/>
            <person name="Hamlin N."/>
            <person name="Harris D.E."/>
            <person name="Hidalgo J."/>
            <person name="Hodgson G."/>
            <person name="Holroyd S."/>
            <person name="Hornsby T."/>
            <person name="Howarth S."/>
            <person name="Huckle E.J."/>
            <person name="Hunt S."/>
            <person name="Jagels K."/>
            <person name="James K.D."/>
            <person name="Jones L."/>
            <person name="Jones M."/>
            <person name="Leather S."/>
            <person name="McDonald S."/>
            <person name="McLean J."/>
            <person name="Mooney P."/>
            <person name="Moule S."/>
            <person name="Mungall K.L."/>
            <person name="Murphy L.D."/>
            <person name="Niblett D."/>
            <person name="Odell C."/>
            <person name="Oliver K."/>
            <person name="O'Neil S."/>
            <person name="Pearson D."/>
            <person name="Quail M.A."/>
            <person name="Rabbinowitsch E."/>
            <person name="Rutherford K.M."/>
            <person name="Rutter S."/>
            <person name="Saunders D."/>
            <person name="Seeger K."/>
            <person name="Sharp S."/>
            <person name="Skelton J."/>
            <person name="Simmonds M.N."/>
            <person name="Squares R."/>
            <person name="Squares S."/>
            <person name="Stevens K."/>
            <person name="Taylor K."/>
            <person name="Taylor R.G."/>
            <person name="Tivey A."/>
            <person name="Walsh S.V."/>
            <person name="Warren T."/>
            <person name="Whitehead S."/>
            <person name="Woodward J.R."/>
            <person name="Volckaert G."/>
            <person name="Aert R."/>
            <person name="Robben J."/>
            <person name="Grymonprez B."/>
            <person name="Weltjens I."/>
            <person name="Vanstreels E."/>
            <person name="Rieger M."/>
            <person name="Schaefer M."/>
            <person name="Mueller-Auer S."/>
            <person name="Gabel C."/>
            <person name="Fuchs M."/>
            <person name="Duesterhoeft A."/>
            <person name="Fritzc C."/>
            <person name="Holzer E."/>
            <person name="Moestl D."/>
            <person name="Hilbert H."/>
            <person name="Borzym K."/>
            <person name="Langer I."/>
            <person name="Beck A."/>
            <person name="Lehrach H."/>
            <person name="Reinhardt R."/>
            <person name="Pohl T.M."/>
            <person name="Eger P."/>
            <person name="Zimmermann W."/>
            <person name="Wedler H."/>
            <person name="Wambutt R."/>
            <person name="Purnelle B."/>
            <person name="Goffeau A."/>
            <person name="Cadieu E."/>
            <person name="Dreano S."/>
            <person name="Gloux S."/>
            <person name="Lelaure V."/>
            <person name="Mottier S."/>
            <person name="Galibert F."/>
            <person name="Aves S.J."/>
            <person name="Xiang Z."/>
            <person name="Hunt C."/>
            <person name="Moore K."/>
            <person name="Hurst S.M."/>
            <person name="Lucas M."/>
            <person name="Rochet M."/>
            <person name="Gaillardin C."/>
            <person name="Tallada V.A."/>
            <person name="Garzon A."/>
            <person name="Thode G."/>
            <person name="Daga R.R."/>
            <person name="Cruzado L."/>
            <person name="Jimenez J."/>
            <person name="Sanchez M."/>
            <person name="del Rey F."/>
            <person name="Benito J."/>
            <person name="Dominguez A."/>
            <person name="Revuelta J.L."/>
            <person name="Moreno S."/>
            <person name="Armstrong J."/>
            <person name="Forsburg S.L."/>
            <person name="Cerutti L."/>
            <person name="Lowe T."/>
            <person name="McCombie W.R."/>
            <person name="Paulsen I."/>
            <person name="Potashkin J."/>
            <person name="Shpakovski G.V."/>
            <person name="Ussery D."/>
            <person name="Barrell B.G."/>
            <person name="Nurse P."/>
        </authorList>
    </citation>
    <scope>NUCLEOTIDE SEQUENCE [LARGE SCALE GENOMIC DNA]</scope>
    <source>
        <strain>972 / ATCC 24843</strain>
    </source>
</reference>
<reference key="2">
    <citation type="journal article" date="2004" name="BioMetals">
        <title>Ferrichrome in Schizosaccharomyces pombe -- an iron transport and iron storage compound.</title>
        <authorList>
            <person name="Schrettl M."/>
            <person name="Winkelmann G."/>
            <person name="Haas H."/>
        </authorList>
    </citation>
    <scope>FUNCTION</scope>
    <scope>IDENTIFICATION BY MASS SPECTROMETRY</scope>
</reference>
<reference key="3">
    <citation type="journal article" date="2006" name="Nat. Biotechnol.">
        <title>ORFeome cloning and global analysis of protein localization in the fission yeast Schizosaccharomyces pombe.</title>
        <authorList>
            <person name="Matsuyama A."/>
            <person name="Arai R."/>
            <person name="Yashiroda Y."/>
            <person name="Shirai A."/>
            <person name="Kamata A."/>
            <person name="Sekido S."/>
            <person name="Kobayashi Y."/>
            <person name="Hashimoto A."/>
            <person name="Hamamoto M."/>
            <person name="Hiraoka Y."/>
            <person name="Horinouchi S."/>
            <person name="Yoshida M."/>
        </authorList>
    </citation>
    <scope>SUBCELLULAR LOCATION [LARGE SCALE ANALYSIS]</scope>
</reference>
<protein>
    <recommendedName>
        <fullName>Hydroxamate-type ferrichrome siderophore peptide synthetase</fullName>
        <ecNumber>6.-.-.-</ecNumber>
    </recommendedName>
</protein>
<organism>
    <name type="scientific">Schizosaccharomyces pombe (strain 972 / ATCC 24843)</name>
    <name type="common">Fission yeast</name>
    <dbReference type="NCBI Taxonomy" id="284812"/>
    <lineage>
        <taxon>Eukaryota</taxon>
        <taxon>Fungi</taxon>
        <taxon>Dikarya</taxon>
        <taxon>Ascomycota</taxon>
        <taxon>Taphrinomycotina</taxon>
        <taxon>Schizosaccharomycetes</taxon>
        <taxon>Schizosaccharomycetales</taxon>
        <taxon>Schizosaccharomycetaceae</taxon>
        <taxon>Schizosaccharomyces</taxon>
    </lineage>
</organism>
<name>SIB1_SCHPO</name>
<evidence type="ECO:0000255" key="1">
    <source>
        <dbReference type="PROSITE-ProRule" id="PRU00258"/>
    </source>
</evidence>
<evidence type="ECO:0000269" key="2">
    <source>
    </source>
</evidence>
<evidence type="ECO:0000269" key="3">
    <source>
    </source>
</evidence>
<evidence type="ECO:0000305" key="4"/>
<proteinExistence type="evidence at protein level"/>
<comment type="function">
    <text evidence="2">Involved in intracellular and extracellular ferrichrome siderophore biosynthesis.</text>
</comment>
<comment type="subcellular location">
    <subcellularLocation>
        <location evidence="3">Cytoplasm</location>
    </subcellularLocation>
</comment>
<comment type="similarity">
    <text evidence="4">Belongs to the ATP-dependent AMP-binding enzyme family.</text>
</comment>